<comment type="function">
    <text evidence="1">The UvrABC repair system catalyzes the recognition and processing of DNA lesions. UvrC both incises the 5' and 3' sides of the lesion. The N-terminal half is responsible for the 3' incision and the C-terminal half is responsible for the 5' incision.</text>
</comment>
<comment type="subunit">
    <text evidence="1">Interacts with UvrB in an incision complex.</text>
</comment>
<comment type="subcellular location">
    <subcellularLocation>
        <location evidence="1">Cytoplasm</location>
    </subcellularLocation>
</comment>
<comment type="similarity">
    <text evidence="1">Belongs to the UvrC family.</text>
</comment>
<proteinExistence type="inferred from homology"/>
<dbReference type="EMBL" id="CP000821">
    <property type="protein sequence ID" value="ABV37063.1"/>
    <property type="molecule type" value="Genomic_DNA"/>
</dbReference>
<dbReference type="RefSeq" id="WP_012142798.1">
    <property type="nucleotide sequence ID" value="NC_009831.1"/>
</dbReference>
<dbReference type="SMR" id="A8FW40"/>
<dbReference type="STRING" id="425104.Ssed_2454"/>
<dbReference type="KEGG" id="sse:Ssed_2454"/>
<dbReference type="eggNOG" id="COG0322">
    <property type="taxonomic scope" value="Bacteria"/>
</dbReference>
<dbReference type="HOGENOM" id="CLU_014841_3_0_6"/>
<dbReference type="OrthoDB" id="9804933at2"/>
<dbReference type="Proteomes" id="UP000002015">
    <property type="component" value="Chromosome"/>
</dbReference>
<dbReference type="GO" id="GO:0005737">
    <property type="term" value="C:cytoplasm"/>
    <property type="evidence" value="ECO:0007669"/>
    <property type="project" value="UniProtKB-SubCell"/>
</dbReference>
<dbReference type="GO" id="GO:0009380">
    <property type="term" value="C:excinuclease repair complex"/>
    <property type="evidence" value="ECO:0007669"/>
    <property type="project" value="InterPro"/>
</dbReference>
<dbReference type="GO" id="GO:0003677">
    <property type="term" value="F:DNA binding"/>
    <property type="evidence" value="ECO:0007669"/>
    <property type="project" value="UniProtKB-UniRule"/>
</dbReference>
<dbReference type="GO" id="GO:0009381">
    <property type="term" value="F:excinuclease ABC activity"/>
    <property type="evidence" value="ECO:0007669"/>
    <property type="project" value="UniProtKB-UniRule"/>
</dbReference>
<dbReference type="GO" id="GO:0006289">
    <property type="term" value="P:nucleotide-excision repair"/>
    <property type="evidence" value="ECO:0007669"/>
    <property type="project" value="UniProtKB-UniRule"/>
</dbReference>
<dbReference type="GO" id="GO:0009432">
    <property type="term" value="P:SOS response"/>
    <property type="evidence" value="ECO:0007669"/>
    <property type="project" value="UniProtKB-UniRule"/>
</dbReference>
<dbReference type="CDD" id="cd10434">
    <property type="entry name" value="GIY-YIG_UvrC_Cho"/>
    <property type="match status" value="1"/>
</dbReference>
<dbReference type="FunFam" id="1.10.150.20:FF:000005">
    <property type="entry name" value="UvrABC system protein C"/>
    <property type="match status" value="1"/>
</dbReference>
<dbReference type="FunFam" id="3.30.420.340:FF:000001">
    <property type="entry name" value="UvrABC system protein C"/>
    <property type="match status" value="1"/>
</dbReference>
<dbReference type="FunFam" id="3.40.1440.10:FF:000001">
    <property type="entry name" value="UvrABC system protein C"/>
    <property type="match status" value="1"/>
</dbReference>
<dbReference type="Gene3D" id="1.10.150.20">
    <property type="entry name" value="5' to 3' exonuclease, C-terminal subdomain"/>
    <property type="match status" value="1"/>
</dbReference>
<dbReference type="Gene3D" id="3.40.1440.10">
    <property type="entry name" value="GIY-YIG endonuclease"/>
    <property type="match status" value="1"/>
</dbReference>
<dbReference type="Gene3D" id="4.10.860.10">
    <property type="entry name" value="UVR domain"/>
    <property type="match status" value="1"/>
</dbReference>
<dbReference type="Gene3D" id="3.30.420.340">
    <property type="entry name" value="UvrC, RNAse H endonuclease domain"/>
    <property type="match status" value="1"/>
</dbReference>
<dbReference type="HAMAP" id="MF_00203">
    <property type="entry name" value="UvrC"/>
    <property type="match status" value="1"/>
</dbReference>
<dbReference type="InterPro" id="IPR000305">
    <property type="entry name" value="GIY-YIG_endonuc"/>
</dbReference>
<dbReference type="InterPro" id="IPR035901">
    <property type="entry name" value="GIY-YIG_endonuc_sf"/>
</dbReference>
<dbReference type="InterPro" id="IPR047296">
    <property type="entry name" value="GIY-YIG_UvrC_Cho"/>
</dbReference>
<dbReference type="InterPro" id="IPR003583">
    <property type="entry name" value="Hlx-hairpin-Hlx_DNA-bd_motif"/>
</dbReference>
<dbReference type="InterPro" id="IPR010994">
    <property type="entry name" value="RuvA_2-like"/>
</dbReference>
<dbReference type="InterPro" id="IPR001943">
    <property type="entry name" value="UVR_dom"/>
</dbReference>
<dbReference type="InterPro" id="IPR036876">
    <property type="entry name" value="UVR_dom_sf"/>
</dbReference>
<dbReference type="InterPro" id="IPR050066">
    <property type="entry name" value="UvrABC_protein_C"/>
</dbReference>
<dbReference type="InterPro" id="IPR004791">
    <property type="entry name" value="UvrC"/>
</dbReference>
<dbReference type="InterPro" id="IPR001162">
    <property type="entry name" value="UvrC_RNase_H_dom"/>
</dbReference>
<dbReference type="InterPro" id="IPR038476">
    <property type="entry name" value="UvrC_RNase_H_dom_sf"/>
</dbReference>
<dbReference type="NCBIfam" id="NF001824">
    <property type="entry name" value="PRK00558.1-5"/>
    <property type="match status" value="1"/>
</dbReference>
<dbReference type="NCBIfam" id="TIGR00194">
    <property type="entry name" value="uvrC"/>
    <property type="match status" value="1"/>
</dbReference>
<dbReference type="PANTHER" id="PTHR30562:SF1">
    <property type="entry name" value="UVRABC SYSTEM PROTEIN C"/>
    <property type="match status" value="1"/>
</dbReference>
<dbReference type="PANTHER" id="PTHR30562">
    <property type="entry name" value="UVRC/OXIDOREDUCTASE"/>
    <property type="match status" value="1"/>
</dbReference>
<dbReference type="Pfam" id="PF01541">
    <property type="entry name" value="GIY-YIG"/>
    <property type="match status" value="1"/>
</dbReference>
<dbReference type="Pfam" id="PF14520">
    <property type="entry name" value="HHH_5"/>
    <property type="match status" value="1"/>
</dbReference>
<dbReference type="Pfam" id="PF02151">
    <property type="entry name" value="UVR"/>
    <property type="match status" value="1"/>
</dbReference>
<dbReference type="Pfam" id="PF22920">
    <property type="entry name" value="UvrC_RNaseH"/>
    <property type="match status" value="1"/>
</dbReference>
<dbReference type="Pfam" id="PF08459">
    <property type="entry name" value="UvrC_RNaseH_dom"/>
    <property type="match status" value="1"/>
</dbReference>
<dbReference type="SMART" id="SM00465">
    <property type="entry name" value="GIYc"/>
    <property type="match status" value="1"/>
</dbReference>
<dbReference type="SMART" id="SM00278">
    <property type="entry name" value="HhH1"/>
    <property type="match status" value="2"/>
</dbReference>
<dbReference type="SUPFAM" id="SSF46600">
    <property type="entry name" value="C-terminal UvrC-binding domain of UvrB"/>
    <property type="match status" value="1"/>
</dbReference>
<dbReference type="SUPFAM" id="SSF82771">
    <property type="entry name" value="GIY-YIG endonuclease"/>
    <property type="match status" value="1"/>
</dbReference>
<dbReference type="SUPFAM" id="SSF47781">
    <property type="entry name" value="RuvA domain 2-like"/>
    <property type="match status" value="1"/>
</dbReference>
<dbReference type="PROSITE" id="PS50164">
    <property type="entry name" value="GIY_YIG"/>
    <property type="match status" value="1"/>
</dbReference>
<dbReference type="PROSITE" id="PS50151">
    <property type="entry name" value="UVR"/>
    <property type="match status" value="1"/>
</dbReference>
<dbReference type="PROSITE" id="PS50165">
    <property type="entry name" value="UVRC"/>
    <property type="match status" value="1"/>
</dbReference>
<protein>
    <recommendedName>
        <fullName evidence="1">UvrABC system protein C</fullName>
        <shortName evidence="1">Protein UvrC</shortName>
    </recommendedName>
    <alternativeName>
        <fullName evidence="1">Excinuclease ABC subunit C</fullName>
    </alternativeName>
</protein>
<gene>
    <name evidence="1" type="primary">uvrC</name>
    <name type="ordered locus">Ssed_2454</name>
</gene>
<sequence length="609" mass="68531">MPSTFDSKLFLKTVSSSPGVYRMYDEEGTVIYVGKAKDLKKRLSSYFRVNLPNVKTQALVSHIANIDVTVTHSETDALILENDYIKQYMPRYNVLLRDDKSYPYILLSDHKHPRLAYHRGPKRDKGSYFGPYPNGGAVRESLHLLQKIFPIRQCDDLYYKSRSRPCLQYQIGRCSAPCVNKVSDEEYAVQVKLASLFLKGKDLQVMTELVSKMEASALALEYEQAASYRDQIAALRRVAEQQEVSNTSGDMDVIGAYYASGVACFHLLFIREGKIFGSRSYYPSVPAETELDEVLSAFMIQFYLNSDSQRTVPKEILLSHGFDDLPELERAIQTALEKKVEIKTNVRSERANFLRLAVTNATNAVNTRLSHKNTVEQRFLLLEEALEVSTLIQRMECFDISHTMGESTVASCVVFDREGPNKADYRRYNINGITPGDDYAAMKQAITRRFDKIDKNGKIPDLLFIDGGTGQLRIAQKIVDEKFVDIDKTPMLIGVAKGEGRKPGLETLIYGENEQSFTIPADSGALHLIQHIRDESHRFAITGHRNKRQKTRNTSTLESIAGVGPKRRKALLQYLGGIQEVKGASVAELAKVPGISLEMAQTIHDSLRG</sequence>
<organism>
    <name type="scientific">Shewanella sediminis (strain HAW-EB3)</name>
    <dbReference type="NCBI Taxonomy" id="425104"/>
    <lineage>
        <taxon>Bacteria</taxon>
        <taxon>Pseudomonadati</taxon>
        <taxon>Pseudomonadota</taxon>
        <taxon>Gammaproteobacteria</taxon>
        <taxon>Alteromonadales</taxon>
        <taxon>Shewanellaceae</taxon>
        <taxon>Shewanella</taxon>
    </lineage>
</organism>
<feature type="chain" id="PRO_1000077842" description="UvrABC system protein C">
    <location>
        <begin position="1"/>
        <end position="609"/>
    </location>
</feature>
<feature type="domain" description="GIY-YIG" evidence="1">
    <location>
        <begin position="16"/>
        <end position="94"/>
    </location>
</feature>
<feature type="domain" description="UVR" evidence="1">
    <location>
        <begin position="203"/>
        <end position="238"/>
    </location>
</feature>
<name>UVRC_SHESH</name>
<accession>A8FW40</accession>
<reference key="1">
    <citation type="submission" date="2007-08" db="EMBL/GenBank/DDBJ databases">
        <title>Complete sequence of Shewanella sediminis HAW-EB3.</title>
        <authorList>
            <consortium name="US DOE Joint Genome Institute"/>
            <person name="Copeland A."/>
            <person name="Lucas S."/>
            <person name="Lapidus A."/>
            <person name="Barry K."/>
            <person name="Glavina del Rio T."/>
            <person name="Dalin E."/>
            <person name="Tice H."/>
            <person name="Pitluck S."/>
            <person name="Chertkov O."/>
            <person name="Brettin T."/>
            <person name="Bruce D."/>
            <person name="Detter J.C."/>
            <person name="Han C."/>
            <person name="Schmutz J."/>
            <person name="Larimer F."/>
            <person name="Land M."/>
            <person name="Hauser L."/>
            <person name="Kyrpides N."/>
            <person name="Kim E."/>
            <person name="Zhao J.-S."/>
            <person name="Richardson P."/>
        </authorList>
    </citation>
    <scope>NUCLEOTIDE SEQUENCE [LARGE SCALE GENOMIC DNA]</scope>
    <source>
        <strain>HAW-EB3</strain>
    </source>
</reference>
<keyword id="KW-0963">Cytoplasm</keyword>
<keyword id="KW-0227">DNA damage</keyword>
<keyword id="KW-0228">DNA excision</keyword>
<keyword id="KW-0234">DNA repair</keyword>
<keyword id="KW-0267">Excision nuclease</keyword>
<keyword id="KW-1185">Reference proteome</keyword>
<keyword id="KW-0742">SOS response</keyword>
<evidence type="ECO:0000255" key="1">
    <source>
        <dbReference type="HAMAP-Rule" id="MF_00203"/>
    </source>
</evidence>